<protein>
    <recommendedName>
        <fullName evidence="1">O-phospho-L-seryl-tRNA:Cys-tRNA synthase</fullName>
        <ecNumber evidence="1">2.5.1.73</ecNumber>
    </recommendedName>
    <alternativeName>
        <fullName evidence="1">Sep-tRNA:Cys-tRNA synthase</fullName>
        <shortName evidence="1">SepCysS</shortName>
    </alternativeName>
</protein>
<reference key="1">
    <citation type="submission" date="2007-10" db="EMBL/GenBank/DDBJ databases">
        <title>Complete sequence of Methanococcus maripaludis C6.</title>
        <authorList>
            <consortium name="US DOE Joint Genome Institute"/>
            <person name="Copeland A."/>
            <person name="Lucas S."/>
            <person name="Lapidus A."/>
            <person name="Barry K."/>
            <person name="Glavina del Rio T."/>
            <person name="Dalin E."/>
            <person name="Tice H."/>
            <person name="Pitluck S."/>
            <person name="Clum A."/>
            <person name="Schmutz J."/>
            <person name="Larimer F."/>
            <person name="Land M."/>
            <person name="Hauser L."/>
            <person name="Kyrpides N."/>
            <person name="Mikhailova N."/>
            <person name="Sieprawska-Lupa M."/>
            <person name="Whitman W.B."/>
            <person name="Richardson P."/>
        </authorList>
    </citation>
    <scope>NUCLEOTIDE SEQUENCE [LARGE SCALE GENOMIC DNA]</scope>
    <source>
        <strain>C6 / ATCC BAA-1332</strain>
    </source>
</reference>
<sequence length="380" mass="43252">MEINTDKYKNITRNLEREMINLNPIQRGGIIPTESKKIIYEYWDGYSVCDYCSGRLDKIETPPINEFLEDMSKFLGMDITRPTHGARESKYAVMNSVCKEGDYVVLDGNAHYTSYVALERAKLNYEKTDIEEYPTFRVIPESYAEKIDMLEDSKKNIGLILLTHVDGNYGNVADVKKVGKIAKSKGYPFLLNCAYSAGRMPIDGKKLNVDFIAASGHKSMAASGPCGLLSINKSYEDEVLETSKVNAVKELQMLGCTSRGIPILSLMASFEHLIERVKQWDLEVEKTRKVVNELEPLGFNQIGEKPRNHDIIRFETPILDEIAEKDKRRGFFFYEELKKRGIGGIRRGVTKEFKMSVYGLTNSQVDYVINSMKSIINELR</sequence>
<feature type="chain" id="PRO_0000359450" description="O-phospho-L-seryl-tRNA:Cys-tRNA synthase">
    <location>
        <begin position="1"/>
        <end position="380"/>
    </location>
</feature>
<feature type="binding site" evidence="1">
    <location>
        <begin position="86"/>
        <end position="87"/>
    </location>
    <ligand>
        <name>pyridoxal 5'-phosphate</name>
        <dbReference type="ChEBI" id="CHEBI:597326"/>
    </ligand>
</feature>
<feature type="binding site" evidence="1">
    <location>
        <position position="192"/>
    </location>
    <ligand>
        <name>pyridoxal 5'-phosphate</name>
        <dbReference type="ChEBI" id="CHEBI:597326"/>
    </ligand>
</feature>
<feature type="binding site" evidence="1">
    <location>
        <begin position="215"/>
        <end position="217"/>
    </location>
    <ligand>
        <name>pyridoxal 5'-phosphate</name>
        <dbReference type="ChEBI" id="CHEBI:597326"/>
    </ligand>
</feature>
<feature type="modified residue" description="N6-(pyridoxal phosphate)lysine" evidence="1">
    <location>
        <position position="218"/>
    </location>
</feature>
<gene>
    <name type="ordered locus">MmarC6_1433</name>
</gene>
<name>SPSS_METM6</name>
<organism>
    <name type="scientific">Methanococcus maripaludis (strain C6 / ATCC BAA-1332)</name>
    <dbReference type="NCBI Taxonomy" id="444158"/>
    <lineage>
        <taxon>Archaea</taxon>
        <taxon>Methanobacteriati</taxon>
        <taxon>Methanobacteriota</taxon>
        <taxon>Methanomada group</taxon>
        <taxon>Methanococci</taxon>
        <taxon>Methanococcales</taxon>
        <taxon>Methanococcaceae</taxon>
        <taxon>Methanococcus</taxon>
    </lineage>
</organism>
<comment type="function">
    <text evidence="1">Converts O-phospho-L-seryl-tRNA(Cys) (Sep-tRNA(Cys)) to L-cysteinyl-tRNA(Cys) (Cys-tRNA(Cys)).</text>
</comment>
<comment type="catalytic activity">
    <reaction evidence="1">
        <text>O-phospho-L-seryl-tRNA(Cys) + hydrogen sulfide + H(+) = L-cysteinyl-tRNA(Cys) + phosphate</text>
        <dbReference type="Rhea" id="RHEA:25686"/>
        <dbReference type="Rhea" id="RHEA-COMP:9679"/>
        <dbReference type="Rhea" id="RHEA-COMP:9719"/>
        <dbReference type="ChEBI" id="CHEBI:15378"/>
        <dbReference type="ChEBI" id="CHEBI:29919"/>
        <dbReference type="ChEBI" id="CHEBI:43474"/>
        <dbReference type="ChEBI" id="CHEBI:78517"/>
        <dbReference type="ChEBI" id="CHEBI:78551"/>
        <dbReference type="EC" id="2.5.1.73"/>
    </reaction>
</comment>
<comment type="cofactor">
    <cofactor evidence="1">
        <name>pyridoxal 5'-phosphate</name>
        <dbReference type="ChEBI" id="CHEBI:597326"/>
    </cofactor>
</comment>
<comment type="subunit">
    <text evidence="1">Homodimer. Interacts with SepRS.</text>
</comment>
<comment type="similarity">
    <text evidence="1">Belongs to the SepCysS family.</text>
</comment>
<accession>A9AA73</accession>
<keyword id="KW-0648">Protein biosynthesis</keyword>
<keyword id="KW-0663">Pyridoxal phosphate</keyword>
<keyword id="KW-0808">Transferase</keyword>
<evidence type="ECO:0000255" key="1">
    <source>
        <dbReference type="HAMAP-Rule" id="MF_01675"/>
    </source>
</evidence>
<dbReference type="EC" id="2.5.1.73" evidence="1"/>
<dbReference type="EMBL" id="CP000867">
    <property type="protein sequence ID" value="ABX02246.1"/>
    <property type="molecule type" value="Genomic_DNA"/>
</dbReference>
<dbReference type="SMR" id="A9AA73"/>
<dbReference type="STRING" id="444158.MmarC6_1433"/>
<dbReference type="KEGG" id="mmx:MmarC6_1433"/>
<dbReference type="eggNOG" id="arCOG00091">
    <property type="taxonomic scope" value="Archaea"/>
</dbReference>
<dbReference type="HOGENOM" id="CLU_060476_0_0_2"/>
<dbReference type="OrthoDB" id="5817at2157"/>
<dbReference type="PhylomeDB" id="A9AA73"/>
<dbReference type="GO" id="GO:0043766">
    <property type="term" value="F:Sep-tRNA:Cys-tRNA synthase activity"/>
    <property type="evidence" value="ECO:0007669"/>
    <property type="project" value="UniProtKB-UniRule"/>
</dbReference>
<dbReference type="GO" id="GO:0006412">
    <property type="term" value="P:translation"/>
    <property type="evidence" value="ECO:0007669"/>
    <property type="project" value="UniProtKB-KW"/>
</dbReference>
<dbReference type="Gene3D" id="3.90.1150.10">
    <property type="entry name" value="Aspartate Aminotransferase, domain 1"/>
    <property type="match status" value="1"/>
</dbReference>
<dbReference type="Gene3D" id="3.40.640.10">
    <property type="entry name" value="Type I PLP-dependent aspartate aminotransferase-like (Major domain)"/>
    <property type="match status" value="1"/>
</dbReference>
<dbReference type="HAMAP" id="MF_01675">
    <property type="entry name" value="Sep_Cys_tRNA_synth"/>
    <property type="match status" value="1"/>
</dbReference>
<dbReference type="InterPro" id="IPR015424">
    <property type="entry name" value="PyrdxlP-dep_Trfase"/>
</dbReference>
<dbReference type="InterPro" id="IPR015421">
    <property type="entry name" value="PyrdxlP-dep_Trfase_major"/>
</dbReference>
<dbReference type="InterPro" id="IPR015422">
    <property type="entry name" value="PyrdxlP-dep_Trfase_small"/>
</dbReference>
<dbReference type="InterPro" id="IPR013375">
    <property type="entry name" value="Sep_Cys-tRNA_synth_arc"/>
</dbReference>
<dbReference type="InterPro" id="IPR008829">
    <property type="entry name" value="SepSecS/SepCysS"/>
</dbReference>
<dbReference type="NCBIfam" id="NF006810">
    <property type="entry name" value="PRK09331.1"/>
    <property type="match status" value="1"/>
</dbReference>
<dbReference type="NCBIfam" id="TIGR02539">
    <property type="entry name" value="SepCysS"/>
    <property type="match status" value="1"/>
</dbReference>
<dbReference type="PANTHER" id="PTHR43586">
    <property type="entry name" value="CYSTEINE DESULFURASE"/>
    <property type="match status" value="1"/>
</dbReference>
<dbReference type="PANTHER" id="PTHR43586:SF3">
    <property type="entry name" value="O-PHOSPHO-L-SERYL-TRNA:CYS-TRNA SYNTHASE"/>
    <property type="match status" value="1"/>
</dbReference>
<dbReference type="Pfam" id="PF05889">
    <property type="entry name" value="SepSecS"/>
    <property type="match status" value="1"/>
</dbReference>
<dbReference type="SUPFAM" id="SSF53383">
    <property type="entry name" value="PLP-dependent transferases"/>
    <property type="match status" value="1"/>
</dbReference>
<proteinExistence type="inferred from homology"/>